<organism>
    <name type="scientific">Rattus norvegicus</name>
    <name type="common">Rat</name>
    <dbReference type="NCBI Taxonomy" id="10116"/>
    <lineage>
        <taxon>Eukaryota</taxon>
        <taxon>Metazoa</taxon>
        <taxon>Chordata</taxon>
        <taxon>Craniata</taxon>
        <taxon>Vertebrata</taxon>
        <taxon>Euteleostomi</taxon>
        <taxon>Mammalia</taxon>
        <taxon>Eutheria</taxon>
        <taxon>Euarchontoglires</taxon>
        <taxon>Glires</taxon>
        <taxon>Rodentia</taxon>
        <taxon>Myomorpha</taxon>
        <taxon>Muroidea</taxon>
        <taxon>Muridae</taxon>
        <taxon>Murinae</taxon>
        <taxon>Rattus</taxon>
    </lineage>
</organism>
<sequence>MELASARLLRGQIPWRGLLLTASLLTYWSPLTTAQVTVDAVPPNVVEEKSVLLLAHNLPQEFQVFYWYKGTTLNPDSEIARYIRSDNMSKTGPAYSGRETIYSNGSLFFQNVNKTDERAYTLSVFDQQFNPIQTSVQFRVYPALQKPNVTGNNSNPMEGEPFVSLMCEPYTNNTSYLWSRNGESLSEGDRVTFSEGNRTLTLLNVRRTDKGYYECEARNPATFNRSDPFNLDVIYGPDAPVISPPDIYLHQGSNLNLSCHADSNPPAQYFWLINEKLQTSSQELFISNITTNNSGTYACFVNNTVTGLSRTTVKNITVFEPVTQPSIQITNTTVKELGSVTLTCFSKDTGVSVRWLFNSQSLQLTDRMTLSQDNSTLRIDPIKREDAGDYQCEISNPVSFRISHPIKLDVIPDPTQGNSGLSEGAIAGIVIGSVAGVALIAALAYFLYSRKTGGGSDHRDLTEHKPSTSSHNLGPSDDSPNKVDDVSYSVLNFNAQQSKRPTSASSSPTETVYSVVKKK</sequence>
<gene>
    <name evidence="38" type="primary">Ceacam1</name>
</gene>
<dbReference type="EMBL" id="J04963">
    <property type="protein sequence ID" value="AAA41104.1"/>
    <property type="molecule type" value="mRNA"/>
</dbReference>
<dbReference type="EMBL" id="Z12019">
    <property type="protein sequence ID" value="CAA78054.1"/>
    <property type="molecule type" value="mRNA"/>
</dbReference>
<dbReference type="EMBL" id="M92848">
    <property type="protein sequence ID" value="AAA16783.1"/>
    <property type="status" value="ALT_SEQ"/>
    <property type="molecule type" value="mRNA"/>
</dbReference>
<dbReference type="EMBL" id="X71122">
    <property type="protein sequence ID" value="CAA50435.1"/>
    <property type="molecule type" value="mRNA"/>
</dbReference>
<dbReference type="EMBL" id="X91137">
    <property type="protein sequence ID" value="CAA62577.1"/>
    <property type="molecule type" value="mRNA"/>
</dbReference>
<dbReference type="EMBL" id="AC134759">
    <property type="status" value="NOT_ANNOTATED_CDS"/>
    <property type="molecule type" value="Genomic_DNA"/>
</dbReference>
<dbReference type="EMBL" id="CH473979">
    <property type="protein sequence ID" value="EDM08020.1"/>
    <property type="molecule type" value="Genomic_DNA"/>
</dbReference>
<dbReference type="EMBL" id="BC061740">
    <property type="protein sequence ID" value="AAH61740.1"/>
    <property type="molecule type" value="mRNA"/>
</dbReference>
<dbReference type="PIR" id="A44783">
    <property type="entry name" value="A44783"/>
</dbReference>
<dbReference type="PIR" id="S23969">
    <property type="entry name" value="S23969"/>
</dbReference>
<dbReference type="PIR" id="S68177">
    <property type="entry name" value="S68177"/>
</dbReference>
<dbReference type="RefSeq" id="NP_001029032.1">
    <molecule id="P16573-1"/>
    <property type="nucleotide sequence ID" value="NM_001033860.1"/>
</dbReference>
<dbReference type="RefSeq" id="NP_001029033.1">
    <property type="nucleotide sequence ID" value="NM_001033861.1"/>
</dbReference>
<dbReference type="RefSeq" id="NP_001029034.1">
    <molecule id="P16573-2"/>
    <property type="nucleotide sequence ID" value="NM_001033862.1"/>
</dbReference>
<dbReference type="RefSeq" id="NP_113943.1">
    <property type="nucleotide sequence ID" value="NM_031755.2"/>
</dbReference>
<dbReference type="RefSeq" id="XP_063131131.1">
    <molecule id="P16573-2"/>
    <property type="nucleotide sequence ID" value="XM_063275061.1"/>
</dbReference>
<dbReference type="SMR" id="P16573"/>
<dbReference type="FunCoup" id="P16573">
    <property type="interactions" value="104"/>
</dbReference>
<dbReference type="MINT" id="P16573"/>
<dbReference type="STRING" id="10116.ENSRNOP00000046654"/>
<dbReference type="TCDB" id="8.A.23.1.4">
    <property type="family name" value="the basigin (basigin) family"/>
</dbReference>
<dbReference type="GlyCosmos" id="P16573">
    <property type="glycosylation" value="15 sites, No reported glycans"/>
</dbReference>
<dbReference type="GlyGen" id="P16573">
    <property type="glycosylation" value="16 sites"/>
</dbReference>
<dbReference type="iPTMnet" id="P16573"/>
<dbReference type="PhosphoSitePlus" id="P16573"/>
<dbReference type="PaxDb" id="10116-ENSRNOP00000046654"/>
<dbReference type="Ensembl" id="ENSRNOT00000051892.7">
    <molecule id="P16573-1"/>
    <property type="protein sequence ID" value="ENSRNOP00000046654.3"/>
    <property type="gene ID" value="ENSRNOG00000020578.9"/>
</dbReference>
<dbReference type="Ensembl" id="ENSRNOT00000090629.2">
    <molecule id="P16573-2"/>
    <property type="protein sequence ID" value="ENSRNOP00000074820.1"/>
    <property type="gene ID" value="ENSRNOG00000020578.9"/>
</dbReference>
<dbReference type="GeneID" id="81613"/>
<dbReference type="KEGG" id="rno:81613"/>
<dbReference type="UCSC" id="RGD:67396">
    <molecule id="P16573-1"/>
    <property type="organism name" value="rat"/>
</dbReference>
<dbReference type="AGR" id="RGD:67396"/>
<dbReference type="CTD" id="634"/>
<dbReference type="RGD" id="67396">
    <property type="gene designation" value="Ceacam1"/>
</dbReference>
<dbReference type="eggNOG" id="ENOG502RXPD">
    <property type="taxonomic scope" value="Eukaryota"/>
</dbReference>
<dbReference type="GeneTree" id="ENSGT01100000263479"/>
<dbReference type="InParanoid" id="P16573"/>
<dbReference type="OMA" id="YTCSVYN"/>
<dbReference type="OrthoDB" id="6159398at2759"/>
<dbReference type="TreeFam" id="TF336859"/>
<dbReference type="Reactome" id="R-RNO-1566977">
    <property type="pathway name" value="Fibronectin matrix formation"/>
</dbReference>
<dbReference type="Reactome" id="R-RNO-163125">
    <property type="pathway name" value="Post-translational modification: synthesis of GPI-anchored proteins"/>
</dbReference>
<dbReference type="Reactome" id="R-RNO-202733">
    <property type="pathway name" value="Cell surface interactions at the vascular wall"/>
</dbReference>
<dbReference type="Reactome" id="R-RNO-6798695">
    <property type="pathway name" value="Neutrophil degranulation"/>
</dbReference>
<dbReference type="PRO" id="PR:P16573"/>
<dbReference type="Proteomes" id="UP000002494">
    <property type="component" value="Chromosome 1"/>
</dbReference>
<dbReference type="Proteomes" id="UP000234681">
    <property type="component" value="Chromosome 1"/>
</dbReference>
<dbReference type="Bgee" id="ENSRNOG00000020578">
    <property type="expression patterns" value="Expressed in jejunum and 18 other cell types or tissues"/>
</dbReference>
<dbReference type="ExpressionAtlas" id="P16573">
    <property type="expression patterns" value="baseline and differential"/>
</dbReference>
<dbReference type="GO" id="GO:0005912">
    <property type="term" value="C:adherens junction"/>
    <property type="evidence" value="ECO:0000314"/>
    <property type="project" value="UniProtKB"/>
</dbReference>
<dbReference type="GO" id="GO:0016324">
    <property type="term" value="C:apical plasma membrane"/>
    <property type="evidence" value="ECO:0000314"/>
    <property type="project" value="UniProtKB"/>
</dbReference>
<dbReference type="GO" id="GO:0009925">
    <property type="term" value="C:basal plasma membrane"/>
    <property type="evidence" value="ECO:0000314"/>
    <property type="project" value="UniProtKB"/>
</dbReference>
<dbReference type="GO" id="GO:0030054">
    <property type="term" value="C:cell junction"/>
    <property type="evidence" value="ECO:0000314"/>
    <property type="project" value="UniProtKB"/>
</dbReference>
<dbReference type="GO" id="GO:0009986">
    <property type="term" value="C:cell surface"/>
    <property type="evidence" value="ECO:0000250"/>
    <property type="project" value="UniProtKB"/>
</dbReference>
<dbReference type="GO" id="GO:0005911">
    <property type="term" value="C:cell-cell junction"/>
    <property type="evidence" value="ECO:0000314"/>
    <property type="project" value="RGD"/>
</dbReference>
<dbReference type="GO" id="GO:0060170">
    <property type="term" value="C:ciliary membrane"/>
    <property type="evidence" value="ECO:0000266"/>
    <property type="project" value="RGD"/>
</dbReference>
<dbReference type="GO" id="GO:0009897">
    <property type="term" value="C:external side of plasma membrane"/>
    <property type="evidence" value="ECO:0000266"/>
    <property type="project" value="RGD"/>
</dbReference>
<dbReference type="GO" id="GO:0016328">
    <property type="term" value="C:lateral plasma membrane"/>
    <property type="evidence" value="ECO:0000314"/>
    <property type="project" value="UniProtKB"/>
</dbReference>
<dbReference type="GO" id="GO:0016020">
    <property type="term" value="C:membrane"/>
    <property type="evidence" value="ECO:0000266"/>
    <property type="project" value="RGD"/>
</dbReference>
<dbReference type="GO" id="GO:0031528">
    <property type="term" value="C:microvillus membrane"/>
    <property type="evidence" value="ECO:0007669"/>
    <property type="project" value="UniProtKB-SubCell"/>
</dbReference>
<dbReference type="GO" id="GO:0005886">
    <property type="term" value="C:plasma membrane"/>
    <property type="evidence" value="ECO:0000314"/>
    <property type="project" value="UniProtKB"/>
</dbReference>
<dbReference type="GO" id="GO:0042101">
    <property type="term" value="C:T cell receptor complex"/>
    <property type="evidence" value="ECO:0000266"/>
    <property type="project" value="RGD"/>
</dbReference>
<dbReference type="GO" id="GO:0030133">
    <property type="term" value="C:transport vesicle"/>
    <property type="evidence" value="ECO:0007669"/>
    <property type="project" value="UniProtKB-SubCell"/>
</dbReference>
<dbReference type="GO" id="GO:0003779">
    <property type="term" value="F:actin binding"/>
    <property type="evidence" value="ECO:0000266"/>
    <property type="project" value="RGD"/>
</dbReference>
<dbReference type="GO" id="GO:0015125">
    <property type="term" value="F:bile acid transmembrane transporter activity"/>
    <property type="evidence" value="ECO:0000314"/>
    <property type="project" value="UniProtKB"/>
</dbReference>
<dbReference type="GO" id="GO:0005516">
    <property type="term" value="F:calmodulin binding"/>
    <property type="evidence" value="ECO:0000314"/>
    <property type="project" value="UniProtKB"/>
</dbReference>
<dbReference type="GO" id="GO:0031005">
    <property type="term" value="F:filamin binding"/>
    <property type="evidence" value="ECO:0000266"/>
    <property type="project" value="RGD"/>
</dbReference>
<dbReference type="GO" id="GO:0005130">
    <property type="term" value="F:granulocyte colony-stimulating factor receptor binding"/>
    <property type="evidence" value="ECO:0000266"/>
    <property type="project" value="RGD"/>
</dbReference>
<dbReference type="GO" id="GO:0042802">
    <property type="term" value="F:identical protein binding"/>
    <property type="evidence" value="ECO:0000315"/>
    <property type="project" value="UniProtKB"/>
</dbReference>
<dbReference type="GO" id="GO:0019900">
    <property type="term" value="F:kinase binding"/>
    <property type="evidence" value="ECO:0000266"/>
    <property type="project" value="RGD"/>
</dbReference>
<dbReference type="GO" id="GO:0046983">
    <property type="term" value="F:protein dimerization activity"/>
    <property type="evidence" value="ECO:0000314"/>
    <property type="project" value="UniProtKB"/>
</dbReference>
<dbReference type="GO" id="GO:0042803">
    <property type="term" value="F:protein homodimerization activity"/>
    <property type="evidence" value="ECO:0000314"/>
    <property type="project" value="UniProtKB"/>
</dbReference>
<dbReference type="GO" id="GO:0019901">
    <property type="term" value="F:protein kinase binding"/>
    <property type="evidence" value="ECO:0000353"/>
    <property type="project" value="RGD"/>
</dbReference>
<dbReference type="GO" id="GO:0019903">
    <property type="term" value="F:protein phosphatase binding"/>
    <property type="evidence" value="ECO:0000266"/>
    <property type="project" value="RGD"/>
</dbReference>
<dbReference type="GO" id="GO:1990782">
    <property type="term" value="F:protein tyrosine kinase binding"/>
    <property type="evidence" value="ECO:0000266"/>
    <property type="project" value="RGD"/>
</dbReference>
<dbReference type="GO" id="GO:0035325">
    <property type="term" value="F:Toll-like receptor binding"/>
    <property type="evidence" value="ECO:0000266"/>
    <property type="project" value="RGD"/>
</dbReference>
<dbReference type="GO" id="GO:0015721">
    <property type="term" value="P:bile acid and bile salt transport"/>
    <property type="evidence" value="ECO:0000314"/>
    <property type="project" value="UniProtKB"/>
</dbReference>
<dbReference type="GO" id="GO:0001568">
    <property type="term" value="P:blood vessel development"/>
    <property type="evidence" value="ECO:0000250"/>
    <property type="project" value="UniProtKB"/>
</dbReference>
<dbReference type="GO" id="GO:0007155">
    <property type="term" value="P:cell adhesion"/>
    <property type="evidence" value="ECO:0000314"/>
    <property type="project" value="UniProtKB"/>
</dbReference>
<dbReference type="GO" id="GO:0098742">
    <property type="term" value="P:cell-cell adhesion via plasma-membrane adhesion molecules"/>
    <property type="evidence" value="ECO:0000314"/>
    <property type="project" value="UniProtKB"/>
</dbReference>
<dbReference type="GO" id="GO:0045216">
    <property type="term" value="P:cell-cell junction organization"/>
    <property type="evidence" value="ECO:0000266"/>
    <property type="project" value="RGD"/>
</dbReference>
<dbReference type="GO" id="GO:0032869">
    <property type="term" value="P:cellular response to insulin stimulus"/>
    <property type="evidence" value="ECO:0000314"/>
    <property type="project" value="UniProtKB"/>
</dbReference>
<dbReference type="GO" id="GO:0035726">
    <property type="term" value="P:common myeloid progenitor cell proliferation"/>
    <property type="evidence" value="ECO:0000250"/>
    <property type="project" value="UniProtKB"/>
</dbReference>
<dbReference type="GO" id="GO:0038158">
    <property type="term" value="P:granulocyte colony-stimulating factor signaling pathway"/>
    <property type="evidence" value="ECO:0000250"/>
    <property type="project" value="UniProtKB"/>
</dbReference>
<dbReference type="GO" id="GO:0007156">
    <property type="term" value="P:homophilic cell adhesion via plasma membrane adhesion molecules"/>
    <property type="evidence" value="ECO:0000314"/>
    <property type="project" value="UniProtKB"/>
</dbReference>
<dbReference type="GO" id="GO:1901143">
    <property type="term" value="P:insulin catabolic process"/>
    <property type="evidence" value="ECO:0000315"/>
    <property type="project" value="UniProtKB"/>
</dbReference>
<dbReference type="GO" id="GO:0038016">
    <property type="term" value="P:insulin receptor internalization"/>
    <property type="evidence" value="ECO:0000314"/>
    <property type="project" value="UniProtKB"/>
</dbReference>
<dbReference type="GO" id="GO:0045779">
    <property type="term" value="P:negative regulation of bone resorption"/>
    <property type="evidence" value="ECO:0000266"/>
    <property type="project" value="RGD"/>
</dbReference>
<dbReference type="GO" id="GO:0001818">
    <property type="term" value="P:negative regulation of cytokine production"/>
    <property type="evidence" value="ECO:0000266"/>
    <property type="project" value="RGD"/>
</dbReference>
<dbReference type="GO" id="GO:0043318">
    <property type="term" value="P:negative regulation of cytotoxic T cell degranulation"/>
    <property type="evidence" value="ECO:0000250"/>
    <property type="project" value="UniProtKB"/>
</dbReference>
<dbReference type="GO" id="GO:0045717">
    <property type="term" value="P:negative regulation of fatty acid biosynthetic process"/>
    <property type="evidence" value="ECO:0000315"/>
    <property type="project" value="UniProtKB"/>
</dbReference>
<dbReference type="GO" id="GO:0030853">
    <property type="term" value="P:negative regulation of granulocyte differentiation"/>
    <property type="evidence" value="ECO:0000250"/>
    <property type="project" value="UniProtKB"/>
</dbReference>
<dbReference type="GO" id="GO:2000346">
    <property type="term" value="P:negative regulation of hepatocyte proliferation"/>
    <property type="evidence" value="ECO:0000315"/>
    <property type="project" value="UniProtKB"/>
</dbReference>
<dbReference type="GO" id="GO:0032692">
    <property type="term" value="P:negative regulation of interleukin-1 production"/>
    <property type="evidence" value="ECO:0000250"/>
    <property type="project" value="UniProtKB"/>
</dbReference>
<dbReference type="GO" id="GO:0051055">
    <property type="term" value="P:negative regulation of lipid biosynthetic process"/>
    <property type="evidence" value="ECO:0000250"/>
    <property type="project" value="UniProtKB"/>
</dbReference>
<dbReference type="GO" id="GO:0002859">
    <property type="term" value="P:negative regulation of natural killer cell mediated cytotoxicity directed against tumor cell target"/>
    <property type="evidence" value="ECO:0000250"/>
    <property type="project" value="UniProtKB"/>
</dbReference>
<dbReference type="GO" id="GO:0045671">
    <property type="term" value="P:negative regulation of osteoclast differentiation"/>
    <property type="evidence" value="ECO:0000266"/>
    <property type="project" value="RGD"/>
</dbReference>
<dbReference type="GO" id="GO:0090331">
    <property type="term" value="P:negative regulation of platelet aggregation"/>
    <property type="evidence" value="ECO:0000250"/>
    <property type="project" value="UniProtKB"/>
</dbReference>
<dbReference type="GO" id="GO:0006469">
    <property type="term" value="P:negative regulation of protein kinase activity"/>
    <property type="evidence" value="ECO:0000250"/>
    <property type="project" value="UniProtKB"/>
</dbReference>
<dbReference type="GO" id="GO:0001915">
    <property type="term" value="P:negative regulation of T cell mediated cytotoxicity"/>
    <property type="evidence" value="ECO:0000250"/>
    <property type="project" value="UniProtKB"/>
</dbReference>
<dbReference type="GO" id="GO:0042130">
    <property type="term" value="P:negative regulation of T cell proliferation"/>
    <property type="evidence" value="ECO:0000266"/>
    <property type="project" value="RGD"/>
</dbReference>
<dbReference type="GO" id="GO:0050860">
    <property type="term" value="P:negative regulation of T cell receptor signaling pathway"/>
    <property type="evidence" value="ECO:0000250"/>
    <property type="project" value="UniProtKB"/>
</dbReference>
<dbReference type="GO" id="GO:0043116">
    <property type="term" value="P:negative regulation of vascular permeability"/>
    <property type="evidence" value="ECO:0000250"/>
    <property type="project" value="UniProtKB"/>
</dbReference>
<dbReference type="GO" id="GO:1903387">
    <property type="term" value="P:positive regulation of homophilic cell adhesion"/>
    <property type="evidence" value="ECO:0000314"/>
    <property type="project" value="UniProtKB"/>
</dbReference>
<dbReference type="GO" id="GO:0043406">
    <property type="term" value="P:positive regulation of MAP kinase activity"/>
    <property type="evidence" value="ECO:0000314"/>
    <property type="project" value="MGI"/>
</dbReference>
<dbReference type="GO" id="GO:2001214">
    <property type="term" value="P:positive regulation of vasculogenesis"/>
    <property type="evidence" value="ECO:0000250"/>
    <property type="project" value="UniProtKB"/>
</dbReference>
<dbReference type="GO" id="GO:0060312">
    <property type="term" value="P:regulation of blood vessel remodeling"/>
    <property type="evidence" value="ECO:0000250"/>
    <property type="project" value="UniProtKB"/>
</dbReference>
<dbReference type="GO" id="GO:0001558">
    <property type="term" value="P:regulation of cell growth"/>
    <property type="evidence" value="ECO:0000314"/>
    <property type="project" value="UniProtKB"/>
</dbReference>
<dbReference type="GO" id="GO:0030334">
    <property type="term" value="P:regulation of cell migration"/>
    <property type="evidence" value="ECO:0000250"/>
    <property type="project" value="UniProtKB"/>
</dbReference>
<dbReference type="GO" id="GO:0045601">
    <property type="term" value="P:regulation of endothelial cell differentiation"/>
    <property type="evidence" value="ECO:0000250"/>
    <property type="project" value="UniProtKB"/>
</dbReference>
<dbReference type="GO" id="GO:0010594">
    <property type="term" value="P:regulation of endothelial cell migration"/>
    <property type="evidence" value="ECO:0000250"/>
    <property type="project" value="UniProtKB"/>
</dbReference>
<dbReference type="GO" id="GO:0042058">
    <property type="term" value="P:regulation of epidermal growth factor receptor signaling pathway"/>
    <property type="evidence" value="ECO:0000315"/>
    <property type="project" value="UniProtKB"/>
</dbReference>
<dbReference type="GO" id="GO:0070372">
    <property type="term" value="P:regulation of ERK1 and ERK2 cascade"/>
    <property type="evidence" value="ECO:0000314"/>
    <property type="project" value="UniProtKB"/>
</dbReference>
<dbReference type="GO" id="GO:1903385">
    <property type="term" value="P:regulation of homophilic cell adhesion"/>
    <property type="evidence" value="ECO:0000314"/>
    <property type="project" value="UniProtKB"/>
</dbReference>
<dbReference type="GO" id="GO:0002682">
    <property type="term" value="P:regulation of immune system process"/>
    <property type="evidence" value="ECO:0000318"/>
    <property type="project" value="GO_Central"/>
</dbReference>
<dbReference type="GO" id="GO:0051896">
    <property type="term" value="P:regulation of phosphatidylinositol 3-kinase/protein kinase B signal transduction"/>
    <property type="evidence" value="ECO:0000314"/>
    <property type="project" value="UniProtKB"/>
</dbReference>
<dbReference type="GO" id="GO:1903670">
    <property type="term" value="P:regulation of sprouting angiogenesis"/>
    <property type="evidence" value="ECO:0000250"/>
    <property type="project" value="UniProtKB"/>
</dbReference>
<dbReference type="GO" id="GO:0007165">
    <property type="term" value="P:signal transduction"/>
    <property type="evidence" value="ECO:0000318"/>
    <property type="project" value="GO_Central"/>
</dbReference>
<dbReference type="GO" id="GO:0044319">
    <property type="term" value="P:wound healing, spreading of cells"/>
    <property type="evidence" value="ECO:0000250"/>
    <property type="project" value="UniProtKB"/>
</dbReference>
<dbReference type="CDD" id="cd20948">
    <property type="entry name" value="IgC2_CEACAM5-like"/>
    <property type="match status" value="1"/>
</dbReference>
<dbReference type="CDD" id="cd05740">
    <property type="entry name" value="IgI_hCEACAM_2_4_6_like"/>
    <property type="match status" value="2"/>
</dbReference>
<dbReference type="CDD" id="cd05774">
    <property type="entry name" value="IgV_CEACAM_D1"/>
    <property type="match status" value="1"/>
</dbReference>
<dbReference type="FunFam" id="2.60.40.10:FF:000340">
    <property type="entry name" value="Carcinoembryonic antigen-related cell adhesion molecule 1"/>
    <property type="match status" value="1"/>
</dbReference>
<dbReference type="FunFam" id="2.60.40.10:FF:000517">
    <property type="entry name" value="Carcinoembryonic antigen-related cell adhesion molecule 1"/>
    <property type="match status" value="1"/>
</dbReference>
<dbReference type="FunFam" id="2.60.40.10:FF:000244">
    <property type="entry name" value="carcinoembryonic antigen-related cell adhesion molecule 16"/>
    <property type="match status" value="2"/>
</dbReference>
<dbReference type="Gene3D" id="2.60.40.10">
    <property type="entry name" value="Immunoglobulins"/>
    <property type="match status" value="4"/>
</dbReference>
<dbReference type="InterPro" id="IPR050831">
    <property type="entry name" value="CEA_cell_adhesion"/>
</dbReference>
<dbReference type="InterPro" id="IPR007110">
    <property type="entry name" value="Ig-like_dom"/>
</dbReference>
<dbReference type="InterPro" id="IPR036179">
    <property type="entry name" value="Ig-like_dom_sf"/>
</dbReference>
<dbReference type="InterPro" id="IPR013783">
    <property type="entry name" value="Ig-like_fold"/>
</dbReference>
<dbReference type="InterPro" id="IPR003599">
    <property type="entry name" value="Ig_sub"/>
</dbReference>
<dbReference type="InterPro" id="IPR003598">
    <property type="entry name" value="Ig_sub2"/>
</dbReference>
<dbReference type="InterPro" id="IPR013106">
    <property type="entry name" value="Ig_V-set"/>
</dbReference>
<dbReference type="PANTHER" id="PTHR44427:SF1">
    <property type="entry name" value="CARCINOEMBRYONIC ANTIGEN-RELATED CELL ADHESION MOLECULE 1"/>
    <property type="match status" value="1"/>
</dbReference>
<dbReference type="PANTHER" id="PTHR44427">
    <property type="entry name" value="CARCINOEMBRYONIC ANTIGEN-RELATED CELL ADHESION MOLECULE 19"/>
    <property type="match status" value="1"/>
</dbReference>
<dbReference type="Pfam" id="PF13895">
    <property type="entry name" value="Ig_2"/>
    <property type="match status" value="1"/>
</dbReference>
<dbReference type="Pfam" id="PF13927">
    <property type="entry name" value="Ig_3"/>
    <property type="match status" value="2"/>
</dbReference>
<dbReference type="Pfam" id="PF07686">
    <property type="entry name" value="V-set"/>
    <property type="match status" value="1"/>
</dbReference>
<dbReference type="SMART" id="SM00409">
    <property type="entry name" value="IG"/>
    <property type="match status" value="4"/>
</dbReference>
<dbReference type="SMART" id="SM00408">
    <property type="entry name" value="IGc2"/>
    <property type="match status" value="3"/>
</dbReference>
<dbReference type="SUPFAM" id="SSF48726">
    <property type="entry name" value="Immunoglobulin"/>
    <property type="match status" value="4"/>
</dbReference>
<dbReference type="PROSITE" id="PS50835">
    <property type="entry name" value="IG_LIKE"/>
    <property type="match status" value="3"/>
</dbReference>
<reference key="1">
    <citation type="journal article" date="1989" name="J. Biol. Chem.">
        <title>Cloning and expression of a cDNA coding for a rat liver plasma membrane ecto-ATPase. The primary structure of the ecto-ATPase is similar to that of the human biliary glycoprotein I.</title>
        <authorList>
            <person name="Lin S.-H."/>
            <person name="Guidotti G."/>
        </authorList>
    </citation>
    <scope>NUCLEOTIDE SEQUENCE [MRNA] (ALLELE A) (ISOFORM 1)</scope>
    <scope>PROTEIN SEQUENCE OF 50-68</scope>
    <source>
        <strain>Sprague-Dawley</strain>
        <tissue>Liver</tissue>
    </source>
</reference>
<reference key="2">
    <citation type="journal article" date="1992" name="Biochem. J.">
        <title>Molecular cloning and expression of a new rat liver cell-CAM105 isoform. Differential phosphorylation of isoforms.</title>
        <authorList>
            <person name="Culic O."/>
            <person name="Huang Q."/>
            <person name="Flanagan D."/>
            <person name="Hixon D."/>
            <person name="Lin S.-H."/>
        </authorList>
    </citation>
    <scope>NUCLEOTIDE SEQUENCE [MRNA] (ALLELE B) (ISOFORM 2)</scope>
    <scope>VARIANTS SER-49; THR-55; VAL-70; THR-73; GLY-74; LEU-75; ASN-76; SER-86; THR-88; GLN-90; GLU-92; VAL-99; GLY-118; PRO-119; ILE-125 AND LYS-127</scope>
    <source>
        <strain>Sprague-Dawley</strain>
        <tissue>Liver</tissue>
    </source>
</reference>
<reference key="3">
    <citation type="journal article" date="1993" name="Biochem. J.">
        <title>The cytoplasmic domain of C-CAM is required for C-CAM-mediated adhesion function: studies of a C-CAM transcript containing an unspliced intron.</title>
        <authorList>
            <person name="Cheung P.H."/>
            <person name="Culic O."/>
            <person name="Qiu Y."/>
            <person name="Earley K."/>
            <person name="Thompson N."/>
            <person name="Hixson D.C."/>
            <person name="Lin S.-H."/>
        </authorList>
    </citation>
    <scope>NUCLEOTIDE SEQUENCE [MRNA] OF 1-454 (ALLELE A) (ISOFORM 1)</scope>
    <source>
        <tissue>Intestine</tissue>
    </source>
</reference>
<reference key="4">
    <citation type="journal article" date="1993" name="Eur. J. Biochem.">
        <title>Different isoforms and stock-specific variants of the cell adhesion molecule C-CAM (cell-CAM 105) in rat liver.</title>
        <authorList>
            <person name="Edlund M."/>
            <person name="Gaardsvoll H."/>
            <person name="Bock E."/>
            <person name="Oebrink B."/>
        </authorList>
    </citation>
    <scope>NUCLEOTIDE SEQUENCE [MRNA] (ALLELE B) (ISOFORM 2)</scope>
    <scope>VARIANTS SER-49; THR-55; VAL-70; THR-73; GLY-74; LEU-75; ASN-76; SER-86; THR-88; GLN-90; GLU-92; VAL-99; GLY-118; PRO-119; ILE-125 AND LYS-127</scope>
    <source>
        <strain>Sprague-Dawley</strain>
        <strain>Wistar</strain>
        <tissue>Liver</tissue>
    </source>
</reference>
<reference key="5">
    <citation type="journal article" date="1995" name="Eur. J. Biochem.">
        <title>A short isoform of carcinoembryonic-antigen-related rat liver cell-cell adhesion molecule (C-CAM/gp110) mediates intercellular adhesion. Sequencing and recombinant functional analysis.</title>
        <authorList>
            <person name="Lucka L."/>
            <person name="Cichocka I."/>
            <person name="Baeumler K."/>
            <person name="Bechler K."/>
            <person name="Reutter W."/>
        </authorList>
    </citation>
    <scope>NUCLEOTIDE SEQUENCE (ALLELE A) (ISOFORM 2)</scope>
    <scope>SUBCELLULAR LOCATION</scope>
    <scope>FUNCTION</scope>
    <source>
        <strain>Wistar</strain>
        <tissue>Liver</tissue>
    </source>
</reference>
<reference key="6">
    <citation type="journal article" date="2004" name="Nature">
        <title>Genome sequence of the Brown Norway rat yields insights into mammalian evolution.</title>
        <authorList>
            <person name="Gibbs R.A."/>
            <person name="Weinstock G.M."/>
            <person name="Metzker M.L."/>
            <person name="Muzny D.M."/>
            <person name="Sodergren E.J."/>
            <person name="Scherer S."/>
            <person name="Scott G."/>
            <person name="Steffen D."/>
            <person name="Worley K.C."/>
            <person name="Burch P.E."/>
            <person name="Okwuonu G."/>
            <person name="Hines S."/>
            <person name="Lewis L."/>
            <person name="Deramo C."/>
            <person name="Delgado O."/>
            <person name="Dugan-Rocha S."/>
            <person name="Miner G."/>
            <person name="Morgan M."/>
            <person name="Hawes A."/>
            <person name="Gill R."/>
            <person name="Holt R.A."/>
            <person name="Adams M.D."/>
            <person name="Amanatides P.G."/>
            <person name="Baden-Tillson H."/>
            <person name="Barnstead M."/>
            <person name="Chin S."/>
            <person name="Evans C.A."/>
            <person name="Ferriera S."/>
            <person name="Fosler C."/>
            <person name="Glodek A."/>
            <person name="Gu Z."/>
            <person name="Jennings D."/>
            <person name="Kraft C.L."/>
            <person name="Nguyen T."/>
            <person name="Pfannkoch C.M."/>
            <person name="Sitter C."/>
            <person name="Sutton G.G."/>
            <person name="Venter J.C."/>
            <person name="Woodage T."/>
            <person name="Smith D."/>
            <person name="Lee H.-M."/>
            <person name="Gustafson E."/>
            <person name="Cahill P."/>
            <person name="Kana A."/>
            <person name="Doucette-Stamm L."/>
            <person name="Weinstock K."/>
            <person name="Fechtel K."/>
            <person name="Weiss R.B."/>
            <person name="Dunn D.M."/>
            <person name="Green E.D."/>
            <person name="Blakesley R.W."/>
            <person name="Bouffard G.G."/>
            <person name="De Jong P.J."/>
            <person name="Osoegawa K."/>
            <person name="Zhu B."/>
            <person name="Marra M."/>
            <person name="Schein J."/>
            <person name="Bosdet I."/>
            <person name="Fjell C."/>
            <person name="Jones S."/>
            <person name="Krzywinski M."/>
            <person name="Mathewson C."/>
            <person name="Siddiqui A."/>
            <person name="Wye N."/>
            <person name="McPherson J."/>
            <person name="Zhao S."/>
            <person name="Fraser C.M."/>
            <person name="Shetty J."/>
            <person name="Shatsman S."/>
            <person name="Geer K."/>
            <person name="Chen Y."/>
            <person name="Abramzon S."/>
            <person name="Nierman W.C."/>
            <person name="Havlak P.H."/>
            <person name="Chen R."/>
            <person name="Durbin K.J."/>
            <person name="Egan A."/>
            <person name="Ren Y."/>
            <person name="Song X.-Z."/>
            <person name="Li B."/>
            <person name="Liu Y."/>
            <person name="Qin X."/>
            <person name="Cawley S."/>
            <person name="Cooney A.J."/>
            <person name="D'Souza L.M."/>
            <person name="Martin K."/>
            <person name="Wu J.Q."/>
            <person name="Gonzalez-Garay M.L."/>
            <person name="Jackson A.R."/>
            <person name="Kalafus K.J."/>
            <person name="McLeod M.P."/>
            <person name="Milosavljevic A."/>
            <person name="Virk D."/>
            <person name="Volkov A."/>
            <person name="Wheeler D.A."/>
            <person name="Zhang Z."/>
            <person name="Bailey J.A."/>
            <person name="Eichler E.E."/>
            <person name="Tuzun E."/>
            <person name="Birney E."/>
            <person name="Mongin E."/>
            <person name="Ureta-Vidal A."/>
            <person name="Woodwark C."/>
            <person name="Zdobnov E."/>
            <person name="Bork P."/>
            <person name="Suyama M."/>
            <person name="Torrents D."/>
            <person name="Alexandersson M."/>
            <person name="Trask B.J."/>
            <person name="Young J.M."/>
            <person name="Huang H."/>
            <person name="Wang H."/>
            <person name="Xing H."/>
            <person name="Daniels S."/>
            <person name="Gietzen D."/>
            <person name="Schmidt J."/>
            <person name="Stevens K."/>
            <person name="Vitt U."/>
            <person name="Wingrove J."/>
            <person name="Camara F."/>
            <person name="Mar Alba M."/>
            <person name="Abril J.F."/>
            <person name="Guigo R."/>
            <person name="Smit A."/>
            <person name="Dubchak I."/>
            <person name="Rubin E.M."/>
            <person name="Couronne O."/>
            <person name="Poliakov A."/>
            <person name="Huebner N."/>
            <person name="Ganten D."/>
            <person name="Goesele C."/>
            <person name="Hummel O."/>
            <person name="Kreitler T."/>
            <person name="Lee Y.-A."/>
            <person name="Monti J."/>
            <person name="Schulz H."/>
            <person name="Zimdahl H."/>
            <person name="Himmelbauer H."/>
            <person name="Lehrach H."/>
            <person name="Jacob H.J."/>
            <person name="Bromberg S."/>
            <person name="Gullings-Handley J."/>
            <person name="Jensen-Seaman M.I."/>
            <person name="Kwitek A.E."/>
            <person name="Lazar J."/>
            <person name="Pasko D."/>
            <person name="Tonellato P.J."/>
            <person name="Twigger S."/>
            <person name="Ponting C.P."/>
            <person name="Duarte J.M."/>
            <person name="Rice S."/>
            <person name="Goodstadt L."/>
            <person name="Beatson S.A."/>
            <person name="Emes R.D."/>
            <person name="Winter E.E."/>
            <person name="Webber C."/>
            <person name="Brandt P."/>
            <person name="Nyakatura G."/>
            <person name="Adetobi M."/>
            <person name="Chiaromonte F."/>
            <person name="Elnitski L."/>
            <person name="Eswara P."/>
            <person name="Hardison R.C."/>
            <person name="Hou M."/>
            <person name="Kolbe D."/>
            <person name="Makova K."/>
            <person name="Miller W."/>
            <person name="Nekrutenko A."/>
            <person name="Riemer C."/>
            <person name="Schwartz S."/>
            <person name="Taylor J."/>
            <person name="Yang S."/>
            <person name="Zhang Y."/>
            <person name="Lindpaintner K."/>
            <person name="Andrews T.D."/>
            <person name="Caccamo M."/>
            <person name="Clamp M."/>
            <person name="Clarke L."/>
            <person name="Curwen V."/>
            <person name="Durbin R.M."/>
            <person name="Eyras E."/>
            <person name="Searle S.M."/>
            <person name="Cooper G.M."/>
            <person name="Batzoglou S."/>
            <person name="Brudno M."/>
            <person name="Sidow A."/>
            <person name="Stone E.A."/>
            <person name="Payseur B.A."/>
            <person name="Bourque G."/>
            <person name="Lopez-Otin C."/>
            <person name="Puente X.S."/>
            <person name="Chakrabarti K."/>
            <person name="Chatterji S."/>
            <person name="Dewey C."/>
            <person name="Pachter L."/>
            <person name="Bray N."/>
            <person name="Yap V.B."/>
            <person name="Caspi A."/>
            <person name="Tesler G."/>
            <person name="Pevzner P.A."/>
            <person name="Haussler D."/>
            <person name="Roskin K.M."/>
            <person name="Baertsch R."/>
            <person name="Clawson H."/>
            <person name="Furey T.S."/>
            <person name="Hinrichs A.S."/>
            <person name="Karolchik D."/>
            <person name="Kent W.J."/>
            <person name="Rosenbloom K.R."/>
            <person name="Trumbower H."/>
            <person name="Weirauch M."/>
            <person name="Cooper D.N."/>
            <person name="Stenson P.D."/>
            <person name="Ma B."/>
            <person name="Brent M."/>
            <person name="Arumugam M."/>
            <person name="Shteynberg D."/>
            <person name="Copley R.R."/>
            <person name="Taylor M.S."/>
            <person name="Riethman H."/>
            <person name="Mudunuri U."/>
            <person name="Peterson J."/>
            <person name="Guyer M."/>
            <person name="Felsenfeld A."/>
            <person name="Old S."/>
            <person name="Mockrin S."/>
            <person name="Collins F.S."/>
        </authorList>
    </citation>
    <scope>NUCLEOTIDE SEQUENCE [LARGE SCALE GENOMIC DNA]</scope>
    <source>
        <strain>Brown Norway</strain>
    </source>
</reference>
<reference key="7">
    <citation type="submission" date="2005-09" db="EMBL/GenBank/DDBJ databases">
        <authorList>
            <person name="Mural R.J."/>
            <person name="Adams M.D."/>
            <person name="Myers E.W."/>
            <person name="Smith H.O."/>
            <person name="Venter J.C."/>
        </authorList>
    </citation>
    <scope>NUCLEOTIDE SEQUENCE [LARGE SCALE GENOMIC DNA]</scope>
    <scope>IDENTIFICATION</scope>
    <source>
        <strain>Brown Norway</strain>
    </source>
</reference>
<reference key="8">
    <citation type="journal article" date="2004" name="Genome Res.">
        <title>The status, quality, and expansion of the NIH full-length cDNA project: the Mammalian Gene Collection (MGC).</title>
        <authorList>
            <consortium name="The MGC Project Team"/>
        </authorList>
    </citation>
    <scope>NUCLEOTIDE SEQUENCE [LARGE SCALE MRNA] (ALLELE B) (ISOFORM 1)</scope>
    <scope>VARIANTS SER-49; THR-55; VAL-70; THR-73; GLY-74; LEU-75; ASN-76; SER-86; THR-88; GLN-90; GLU-92; VAL-99; GLY-118; PRO-119; ILE-125 AND LYS-127</scope>
    <source>
        <tissue>Prostate</tissue>
    </source>
</reference>
<reference key="9">
    <citation type="journal article" date="1990" name="FEBS Lett.">
        <title>The cell adhesion molecule Cell-CAM 105 is an ecto-ATPase and a member of the immunoglobulin superfamily.</title>
        <authorList>
            <person name="Aurivillius M."/>
            <person name="Hansen O.C."/>
            <person name="Lazrek M.B.S."/>
            <person name="Bock E."/>
            <person name="Oebrink B."/>
        </authorList>
    </citation>
    <scope>PROTEIN SEQUENCE OF 58-66 AND 119-138</scope>
</reference>
<reference key="10">
    <citation type="journal article" date="1993" name="Eur. J. Biochem.">
        <title>Characterisation of the ATP-dependent taurocholate-carrier protein (gp110) of the hepatocyte canalicular membrane.</title>
        <authorList>
            <person name="Becker A."/>
            <person name="Lucka L."/>
            <person name="Kilian C."/>
            <person name="Kannicht C."/>
            <person name="Reutter W."/>
        </authorList>
    </citation>
    <scope>PARTIAL PROTEIN SEQUENCE</scope>
    <scope>SUBCELLULAR LOCATION</scope>
    <source>
        <strain>Wistar</strain>
        <tissue>Liver</tissue>
    </source>
</reference>
<reference key="11">
    <citation type="journal article" date="1993" name="J. Biol. Chem.">
        <title>The rat liver ecto-ATPase is also a canalicular bile acid transport protein.</title>
        <authorList>
            <person name="Sippel C.J."/>
            <person name="Suchy F.J."/>
            <person name="Ananthanarayanan M."/>
            <person name="Perlmutter D.H."/>
        </authorList>
    </citation>
    <scope>PROTEIN SEQUENCE OF 110-138 AND 148-150</scope>
    <scope>PHOSPHORYLATION</scope>
</reference>
<reference key="12">
    <citation type="journal article" date="1990" name="J. Cell Sci.">
        <title>C-CAM (cell-CAM 105) is an adhesive cell surface glycoprotein with homophilic binding properties.</title>
        <authorList>
            <person name="Tingstroem A."/>
            <person name="Blikstad I."/>
            <person name="Aurivillius M."/>
            <person name="Obrink B."/>
        </authorList>
    </citation>
    <scope>HOMODIMERIZATION</scope>
    <scope>FUNCTION</scope>
</reference>
<reference key="13">
    <citation type="journal article" date="1991" name="Biochem. J.">
        <title>Immunochemical characterization of two isoforms of rat liver ecto-ATPase that show an immunological and structural identity with a glycoprotein cell-adhesion molecule with Mr 105,000.</title>
        <authorList>
            <person name="Lin S.-H."/>
            <person name="Culic O."/>
            <person name="Flanagan D."/>
            <person name="Hixson D.C."/>
        </authorList>
    </citation>
    <scope>CHARACTERIZATION</scope>
</reference>
<reference key="14">
    <citation type="journal article" date="1993" name="J. Biol. Chem.">
        <title>Cell-CAM105 isoforms with different adhesion functions are coexpressed in adult rat tissues and during liver development.</title>
        <authorList>
            <person name="Cheung P.H."/>
            <person name="Thompson N.L."/>
            <person name="Earley K."/>
            <person name="Culic O."/>
            <person name="Hixson D."/>
            <person name="Lin S.H."/>
        </authorList>
    </citation>
    <scope>FUNCTION</scope>
    <scope>TISSUE SPECIFICITY</scope>
</reference>
<reference key="15">
    <citation type="journal article" date="1993" name="J. Biol. Chem.">
        <title>pp120/ecto-ATPase, an endogenous substrate of the insulin receptor tyrosine kinase, is expressed as two variably spliced isoforms.</title>
        <authorList>
            <person name="Najjae S.M."/>
            <person name="Accili D."/>
            <person name="Philippe N."/>
            <person name="Jernberg J."/>
            <person name="Margolis R."/>
            <person name="Taylor S.I."/>
        </authorList>
    </citation>
    <scope>ALTERNATIVE SPLICING</scope>
</reference>
<reference key="16">
    <citation type="journal article" date="1994" name="J. Biol. Chem.">
        <title>Bile acid efflux mediated by the rat liver canalicular bile acid transport/ecto-ATPase protein requires serine 503 phosphorylation and is regulated by tyrosine 488 phosphorylation.</title>
        <authorList>
            <person name="Sippel C.J."/>
            <person name="Fallon R.J."/>
            <person name="Perlmutter D.H."/>
        </authorList>
    </citation>
    <scope>FUNCTION</scope>
    <scope>PHOSPHORYLATION AT TYR-488 AND SER-503</scope>
    <scope>SUBCELLULAR LOCATION</scope>
    <scope>MUTAGENESIS OF TYR-488 AND 502-THR-SER-503</scope>
</reference>
<reference key="17">
    <citation type="journal article" date="1995" name="Biochemistry">
        <title>Insulin-stimulated phosphorylation of recombinant pp120/HA4, an endogenous substrate of the insulin receptor tyrosine kinase.</title>
        <authorList>
            <person name="Najjar S.M."/>
            <person name="Philippe N."/>
            <person name="Suzuki Y."/>
            <person name="Ignacio G.A."/>
            <person name="Formisano P."/>
            <person name="Accili D."/>
            <person name="Taylor S.I."/>
        </authorList>
    </citation>
    <scope>PHOSPHORYLATION AT TYR-488 BY INSR</scope>
    <scope>MUTAGENESIS OF TYR-488 AND SER-503</scope>
</reference>
<reference key="18">
    <citation type="journal article" date="1995" name="J. Biol. Chem.">
        <title>Receptor-mediated internalization of insulin. Potential role of pp120/HA4, a substrate of the insulin receptor kinase.</title>
        <authorList>
            <person name="Formisano P."/>
            <person name="Najjar S.M."/>
            <person name="Gross C.N."/>
            <person name="Philippe N."/>
            <person name="Oriente F."/>
            <person name="Kern-Buell C.L."/>
            <person name="Accili D."/>
            <person name="Gorden P."/>
        </authorList>
    </citation>
    <scope>FUNCTION</scope>
    <scope>MUTAGENESIS OF TYR-488; SER-503 AND TYR-513</scope>
</reference>
<reference key="19">
    <citation type="journal article" date="1995" name="FEBS Lett.">
        <title>Cell adhesion activity of the short cytoplasmic domain isoform of C-CAM (C-CAM2) in CHO cells.</title>
        <authorList>
            <person name="Olsson H."/>
            <person name="Wikstroem K."/>
            <person name="Kjellstroem G."/>
            <person name="Obrink B."/>
        </authorList>
    </citation>
    <scope>SUBCELLULAR LOCATION</scope>
    <scope>FUNCTION</scope>
</reference>
<reference key="20">
    <citation type="journal article" date="1996" name="Biochem. J.">
        <title>Evidence for regulated dimerization of cell-cell adhesion molecule (C-CAM) in epithelial cells.</title>
        <authorList>
            <person name="Hunter I."/>
            <person name="Sawa H."/>
            <person name="Edlund M."/>
            <person name="Obrink B."/>
        </authorList>
    </citation>
    <scope>SUBCELLULAR LOCATION</scope>
    <scope>HOMODIMERIZATION</scope>
</reference>
<reference key="21">
    <citation type="journal article" date="1996" name="Exp. Cell Res.">
        <title>Homophilic intercellular adhesion mediated by C-CAM is due to a domain 1-domain 1 reciprocal binding.</title>
        <authorList>
            <person name="Wikstroem K."/>
            <person name="Kjellstroem G."/>
            <person name="Obrink B."/>
        </authorList>
    </citation>
    <scope>DOMAIN</scope>
    <scope>HOMODIMERIZATION</scope>
</reference>
<reference key="22">
    <citation type="journal article" date="1996" name="J. Biol. Chem.">
        <title>Calmodulin binds to specific sequences in the cytoplasmic domain of C-CAM and down-regulates C-CAM self-association.</title>
        <authorList>
            <person name="Edlund M."/>
            <person name="Blikstad I."/>
            <person name="Obrink B."/>
        </authorList>
    </citation>
    <scope>INTERACTION WITH CALMODULIN</scope>
    <scope>REGION</scope>
</reference>
<reference key="23">
    <citation type="journal article" date="1998" name="J. Biol. Chem.">
        <title>Insulin stimulates pp120 endocytosis in cells co-expressing insulin receptors.</title>
        <authorList>
            <person name="Choice C.V."/>
            <person name="Howard M.J."/>
            <person name="Poy M.N."/>
            <person name="Hankin M.H."/>
            <person name="Najjar S.M."/>
        </authorList>
    </citation>
    <scope>FUNCTION</scope>
    <scope>SUBCELLULAR LOCATION</scope>
    <scope>MUTAGENESIS OF TYR-488; SER-503 AND TYR-513</scope>
    <scope>PHOSPHORYLATION AT TYR-488 BY INSR</scope>
</reference>
<reference key="24">
    <citation type="journal article" date="1999" name="Exp. Cell Res.">
        <title>Redefined nomenclature for members of the carcinoembryonic antigen family.</title>
        <authorList>
            <person name="Beauchemin N."/>
            <person name="Draber P."/>
            <person name="Dveksler G."/>
            <person name="Gold P."/>
            <person name="Gray-Owen S."/>
            <person name="Grunert F."/>
            <person name="Hammarstrom S."/>
            <person name="Holmes K.V."/>
            <person name="Karlsson A."/>
            <person name="Kuroki M."/>
            <person name="Lin S.H."/>
            <person name="Lucka L."/>
            <person name="Najjar S.M."/>
            <person name="Neumaier M."/>
            <person name="Obrink B."/>
            <person name="Shively J.E."/>
            <person name="Skubitz K.M."/>
            <person name="Stanners C.P."/>
            <person name="Thomas P."/>
            <person name="Thompson J.A."/>
            <person name="Virji M."/>
            <person name="von Kleist S."/>
            <person name="Wagener C."/>
            <person name="Watt S."/>
            <person name="Zimmermann W."/>
        </authorList>
    </citation>
    <scope>NOMENCLATURE OF ALTERNATIVE SPLICING ISOFORMS</scope>
</reference>
<reference key="25">
    <citation type="journal article" date="2002" name="J. Biol. Chem.">
        <title>Shc and CEACAM1 interact to regulate the mitogenic action of insulin.</title>
        <authorList>
            <person name="Poy M.N."/>
            <person name="Ruch R.J."/>
            <person name="Fernstrom M.A."/>
            <person name="Okabayashi Y."/>
            <person name="Najjar S.M."/>
        </authorList>
    </citation>
    <scope>INTERACTION WITH SHC1</scope>
    <scope>FUNCTION</scope>
    <scope>MUTAGENESIS OF TYR-488 AND SER-503</scope>
</reference>
<reference key="26">
    <citation type="journal article" date="2002" name="J. Immunol.">
        <title>Carcinoembryonic antigen-related cell adhesion molecule 1 expression and signaling in human, mouse, and rat leukocytes: evidence for replacement of the short cytoplasmic domain isoform by glycosylphosphatidylinositol-linked proteins in human leukocytes.</title>
        <authorList>
            <person name="Singer B.B."/>
            <person name="Scheffrahn I."/>
            <person name="Heymann R."/>
            <person name="Sigmundsson K."/>
            <person name="Kammerer R."/>
            <person name="Obrink B."/>
        </authorList>
    </citation>
    <scope>TISSUE SPECIFICITY</scope>
</reference>
<reference key="27">
    <citation type="journal article" date="2002" name="Nat. Genet.">
        <title>CEACAM1 regulates insulin clearance in liver.</title>
        <authorList>
            <person name="Poy M.N."/>
            <person name="Yang Y."/>
            <person name="Rezaei K."/>
            <person name="Fernstroem M.A."/>
            <person name="Lee A.D."/>
            <person name="Kido Y."/>
            <person name="Erickson S.K."/>
            <person name="Najjar S.M."/>
        </authorList>
    </citation>
    <scope>MUTAGENESIS OF SER-503</scope>
    <scope>FUNCTION</scope>
</reference>
<reference key="28">
    <citation type="journal article" date="2004" name="J. Clin. Invest.">
        <title>CEACAM1 modulates epidermal growth factor receptor--mediated cell proliferation.</title>
        <authorList>
            <person name="Abou-Rjaily G.A."/>
            <person name="Lee S.J."/>
            <person name="May D."/>
            <person name="Al-Share Q.Y."/>
            <person name="Deangelis A.M."/>
            <person name="Ruch R.J."/>
            <person name="Neumaier M."/>
            <person name="Kalthoff H."/>
            <person name="Lin S.H."/>
            <person name="Najjar S.M."/>
        </authorList>
    </citation>
    <scope>PHOSPHORYLATION AT TYR-488 BY EGFR</scope>
    <scope>FUNCTION</scope>
    <scope>MUTAGENESIS OF TYR-488 AND SER-503</scope>
    <scope>INTERACTION WITH EGFR</scope>
</reference>
<reference key="29">
    <citation type="journal article" date="2005" name="Cell Metab.">
        <title>Insulin acutely decreases hepatic fatty acid synthase activity.</title>
        <authorList>
            <person name="Najjar S.M."/>
            <person name="Yang Y."/>
            <person name="Fernstroem M.A."/>
            <person name="Lee S.J."/>
            <person name="Deangelis A.M."/>
            <person name="Rjaily G.A."/>
            <person name="Al-Share Q.Y."/>
            <person name="Dai T."/>
            <person name="Miller T.A."/>
            <person name="Ratnam S."/>
            <person name="Ruch R.J."/>
            <person name="Smith S."/>
            <person name="Lin S.H."/>
            <person name="Beauchemin N."/>
            <person name="Oyarce A.M."/>
        </authorList>
    </citation>
    <scope>INTERACTION WITH FASN</scope>
    <scope>MUTAGENESIS OF TYR-488; SER-503 AND TYR-513</scope>
    <scope>SUBCELLULAR LOCATION</scope>
    <scope>FUNCTION</scope>
    <scope>PHOSPHORYLATION AT TYR-488 AND TYR-513 BY INSR</scope>
</reference>
<reference key="30">
    <citation type="journal article" date="2005" name="J. Cell Sci.">
        <title>CEACAM1 functionally interacts with filamin A and exerts a dual role in the regulation of cell migration.</title>
        <authorList>
            <person name="Klaile E."/>
            <person name="Mueller M.M."/>
            <person name="Kannicht C."/>
            <person name="Singer B.B."/>
            <person name="Lucka L."/>
        </authorList>
    </citation>
    <scope>INTERACTION WITH FLNA</scope>
    <scope>REGION</scope>
</reference>
<reference key="31">
    <citation type="journal article" date="2009" name="J. Cell Biol.">
        <title>Homophilic adhesion and CEACAM1-S regulate dimerization of CEACAM1-L and recruitment of SHP-2 and c-Src.</title>
        <authorList>
            <person name="Mueller M.M."/>
            <person name="Klaile E."/>
            <person name="Vorontsova O."/>
            <person name="Singer B.B."/>
            <person name="Obrink B."/>
        </authorList>
    </citation>
    <scope>SUBCELLULAR LOCATION</scope>
    <scope>DOMAIN</scope>
    <scope>INTERACTION WITH PTPN11; PTPN6 AND SRC</scope>
    <scope>SUBUNIT</scope>
</reference>
<protein>
    <recommendedName>
        <fullName evidence="36">Cell adhesion molecule CEACAM1</fullName>
    </recommendedName>
    <alternativeName>
        <fullName>ATP-dependent taurocolate-carrier protein</fullName>
    </alternativeName>
    <alternativeName>
        <fullName evidence="1">Carcinoembryonic antigen-related cell adhesion molecule 1</fullName>
        <shortName evidence="38">CEA cell adhesion molecule 1</shortName>
    </alternativeName>
    <alternativeName>
        <fullName evidence="34">Cell-CAM 105</fullName>
        <shortName>C-CAM 105</shortName>
    </alternativeName>
    <alternativeName>
        <fullName evidence="33">Ecto-ATPase</fullName>
    </alternativeName>
    <alternativeName>
        <fullName evidence="35">GP110</fullName>
    </alternativeName>
    <alternativeName>
        <fullName>pp120</fullName>
    </alternativeName>
    <cdAntigenName>CD66a</cdAntigenName>
</protein>
<accession>P16573</accession>
<accession>Q63093</accession>
<keyword id="KW-0025">Alternative splicing</keyword>
<keyword id="KW-0130">Cell adhesion</keyword>
<keyword id="KW-0965">Cell junction</keyword>
<keyword id="KW-1003">Cell membrane</keyword>
<keyword id="KW-0966">Cell projection</keyword>
<keyword id="KW-0968">Cytoplasmic vesicle</keyword>
<keyword id="KW-0903">Direct protein sequencing</keyword>
<keyword id="KW-1015">Disulfide bond</keyword>
<keyword id="KW-0325">Glycoprotein</keyword>
<keyword id="KW-0393">Immunoglobulin domain</keyword>
<keyword id="KW-0472">Membrane</keyword>
<keyword id="KW-0597">Phosphoprotein</keyword>
<keyword id="KW-0873">Pyrrolidone carboxylic acid</keyword>
<keyword id="KW-1185">Reference proteome</keyword>
<keyword id="KW-0677">Repeat</keyword>
<keyword id="KW-0732">Signal</keyword>
<keyword id="KW-0812">Transmembrane</keyword>
<keyword id="KW-1133">Transmembrane helix</keyword>
<name>CEAM1_RAT</name>
<evidence type="ECO:0000250" key="1">
    <source>
        <dbReference type="UniProtKB" id="P13688"/>
    </source>
</evidence>
<evidence type="ECO:0000250" key="2">
    <source>
        <dbReference type="UniProtKB" id="P31809"/>
    </source>
</evidence>
<evidence type="ECO:0000250" key="3">
    <source>
        <dbReference type="UniProtKB" id="P31997"/>
    </source>
</evidence>
<evidence type="ECO:0000255" key="4"/>
<evidence type="ECO:0000255" key="5">
    <source>
        <dbReference type="PROSITE-ProRule" id="PRU00114"/>
    </source>
</evidence>
<evidence type="ECO:0000255" key="6">
    <source>
        <dbReference type="PROSITE-ProRule" id="PRU00498"/>
    </source>
</evidence>
<evidence type="ECO:0000256" key="7">
    <source>
        <dbReference type="SAM" id="MobiDB-lite"/>
    </source>
</evidence>
<evidence type="ECO:0000269" key="8">
    <source>
    </source>
</evidence>
<evidence type="ECO:0000269" key="9">
    <source>
    </source>
</evidence>
<evidence type="ECO:0000269" key="10">
    <source>
    </source>
</evidence>
<evidence type="ECO:0000269" key="11">
    <source>
    </source>
</evidence>
<evidence type="ECO:0000269" key="12">
    <source>
    </source>
</evidence>
<evidence type="ECO:0000269" key="13">
    <source>
    </source>
</evidence>
<evidence type="ECO:0000269" key="14">
    <source>
    </source>
</evidence>
<evidence type="ECO:0000269" key="15">
    <source>
    </source>
</evidence>
<evidence type="ECO:0000269" key="16">
    <source>
    </source>
</evidence>
<evidence type="ECO:0000269" key="17">
    <source>
    </source>
</evidence>
<evidence type="ECO:0000269" key="18">
    <source>
    </source>
</evidence>
<evidence type="ECO:0000269" key="19">
    <source>
    </source>
</evidence>
<evidence type="ECO:0000269" key="20">
    <source>
    </source>
</evidence>
<evidence type="ECO:0000269" key="21">
    <source>
    </source>
</evidence>
<evidence type="ECO:0000269" key="22">
    <source>
    </source>
</evidence>
<evidence type="ECO:0000269" key="23">
    <source>
    </source>
</evidence>
<evidence type="ECO:0000269" key="24">
    <source>
    </source>
</evidence>
<evidence type="ECO:0000269" key="25">
    <source>
    </source>
</evidence>
<evidence type="ECO:0000269" key="26">
    <source>
    </source>
</evidence>
<evidence type="ECO:0000269" key="27">
    <source>
    </source>
</evidence>
<evidence type="ECO:0000269" key="28">
    <source>
    </source>
</evidence>
<evidence type="ECO:0000269" key="29">
    <source>
    </source>
</evidence>
<evidence type="ECO:0000269" key="30">
    <source>
    </source>
</evidence>
<evidence type="ECO:0000303" key="31">
    <source>
    </source>
</evidence>
<evidence type="ECO:0000303" key="32">
    <source>
    </source>
</evidence>
<evidence type="ECO:0000303" key="33">
    <source>
    </source>
</evidence>
<evidence type="ECO:0000303" key="34">
    <source>
    </source>
</evidence>
<evidence type="ECO:0000303" key="35">
    <source>
    </source>
</evidence>
<evidence type="ECO:0000305" key="36"/>
<evidence type="ECO:0000305" key="37">
    <source>
    </source>
</evidence>
<evidence type="ECO:0000312" key="38">
    <source>
        <dbReference type="RGD" id="67396"/>
    </source>
</evidence>
<feature type="signal peptide" evidence="4">
    <location>
        <begin position="1"/>
        <end position="34"/>
    </location>
</feature>
<feature type="chain" id="PRO_0000014564" description="Cell adhesion molecule CEACAM1">
    <location>
        <begin position="35"/>
        <end position="519"/>
    </location>
</feature>
<feature type="topological domain" description="Extracellular" evidence="36">
    <location>
        <begin position="35"/>
        <end position="425"/>
    </location>
</feature>
<feature type="transmembrane region" description="Helical" evidence="4">
    <location>
        <begin position="426"/>
        <end position="446"/>
    </location>
</feature>
<feature type="topological domain" description="Cytoplasmic" evidence="36">
    <location>
        <begin position="447"/>
        <end position="519"/>
    </location>
</feature>
<feature type="domain" description="Ig-like V-type" evidence="3">
    <location>
        <begin position="42"/>
        <end position="140"/>
    </location>
</feature>
<feature type="domain" description="Ig-like C2-type 1" evidence="5">
    <location>
        <begin position="147"/>
        <end position="232"/>
    </location>
</feature>
<feature type="domain" description="Ig-like C2-type 2" evidence="5">
    <location>
        <begin position="237"/>
        <end position="317"/>
    </location>
</feature>
<feature type="domain" description="Ig-like C2-type 3" evidence="5">
    <location>
        <begin position="325"/>
        <end position="403"/>
    </location>
</feature>
<feature type="region of interest" description="Required for homophilic binding" evidence="28">
    <location>
        <begin position="39"/>
        <end position="142"/>
    </location>
</feature>
<feature type="region of interest" description="Interaction with calmodulin" evidence="27">
    <location>
        <begin position="445"/>
        <end position="457"/>
    </location>
</feature>
<feature type="region of interest" description="Interaction with FLNA" evidence="14">
    <location>
        <begin position="447"/>
        <end position="519"/>
    </location>
</feature>
<feature type="region of interest" description="Disordered" evidence="7">
    <location>
        <begin position="455"/>
        <end position="519"/>
    </location>
</feature>
<feature type="region of interest" description="Required for interaction with PTPN11 and PTPN6 and for control of phosphorylation level" evidence="2">
    <location>
        <begin position="484"/>
        <end position="519"/>
    </location>
</feature>
<feature type="region of interest" description="Essential for interaction with PTPN11 and PTPN6" evidence="2">
    <location>
        <begin position="513"/>
        <end position="516"/>
    </location>
</feature>
<feature type="compositionally biased region" description="Basic and acidic residues" evidence="7">
    <location>
        <begin position="456"/>
        <end position="466"/>
    </location>
</feature>
<feature type="compositionally biased region" description="Polar residues" evidence="7">
    <location>
        <begin position="489"/>
        <end position="512"/>
    </location>
</feature>
<feature type="modified residue" description="Pyrrolidone carboxylic acid" evidence="1">
    <location>
        <position position="35"/>
    </location>
</feature>
<feature type="modified residue" description="Phosphotyrosine; by SRC, LCK, INSR and EGFR" evidence="11 13 18 20 30">
    <location>
        <position position="488"/>
    </location>
</feature>
<feature type="modified residue" description="Phosphoserine" evidence="13 18">
    <location>
        <position position="503"/>
    </location>
</feature>
<feature type="modified residue" description="Phosphotyrosine; by INSR, SRC and LCK" evidence="13">
    <location>
        <position position="513"/>
    </location>
</feature>
<feature type="glycosylation site" description="N-linked (GlcNAc...) asparagine" evidence="6">
    <location>
        <position position="87"/>
    </location>
</feature>
<feature type="glycosylation site" description="N-linked (GlcNAc...) asparagine" evidence="6">
    <location>
        <position position="104"/>
    </location>
</feature>
<feature type="glycosylation site" description="N-linked (GlcNAc...) asparagine" evidence="6">
    <location>
        <position position="113"/>
    </location>
</feature>
<feature type="glycosylation site" description="N-linked (GlcNAc...) asparagine" evidence="6">
    <location>
        <position position="148"/>
    </location>
</feature>
<feature type="glycosylation site" description="N-linked (GlcNAc...) asparagine" evidence="6">
    <location>
        <position position="152"/>
    </location>
</feature>
<feature type="glycosylation site" description="N-linked (GlcNAc...) asparagine" evidence="6">
    <location>
        <position position="173"/>
    </location>
</feature>
<feature type="glycosylation site" description="N-linked (GlcNAc...) asparagine" evidence="6">
    <location>
        <position position="197"/>
    </location>
</feature>
<feature type="glycosylation site" description="N-linked (GlcNAc...) asparagine" evidence="6">
    <location>
        <position position="224"/>
    </location>
</feature>
<feature type="glycosylation site" description="N-linked (GlcNAc...) asparagine" evidence="6">
    <location>
        <position position="256"/>
    </location>
</feature>
<feature type="glycosylation site" description="N-linked (GlcNAc...) asparagine" evidence="6">
    <location>
        <position position="288"/>
    </location>
</feature>
<feature type="glycosylation site" description="N-linked (GlcNAc...) asparagine" evidence="6">
    <location>
        <position position="292"/>
    </location>
</feature>
<feature type="glycosylation site" description="N-linked (GlcNAc...) asparagine" evidence="6">
    <location>
        <position position="302"/>
    </location>
</feature>
<feature type="glycosylation site" description="N-linked (GlcNAc...) asparagine" evidence="6">
    <location>
        <position position="315"/>
    </location>
</feature>
<feature type="glycosylation site" description="N-linked (GlcNAc...) asparagine" evidence="6">
    <location>
        <position position="331"/>
    </location>
</feature>
<feature type="glycosylation site" description="N-linked (GlcNAc...) asparagine; atypical" evidence="2 6">
    <location>
        <position position="374"/>
    </location>
</feature>
<feature type="disulfide bond" evidence="5">
    <location>
        <begin position="167"/>
        <end position="215"/>
    </location>
</feature>
<feature type="disulfide bond" evidence="5">
    <location>
        <begin position="259"/>
        <end position="299"/>
    </location>
</feature>
<feature type="disulfide bond" evidence="5">
    <location>
        <begin position="344"/>
        <end position="392"/>
    </location>
</feature>
<feature type="splice variant" id="VSP_002504" description="In isoform 2." evidence="32 34 35">
    <original>GSDH</original>
    <variation>SGSF</variation>
    <location>
        <begin position="455"/>
        <end position="458"/>
    </location>
</feature>
<feature type="splice variant" id="VSP_002505" description="In isoform 2." evidence="32 34 35">
    <location>
        <begin position="459"/>
        <end position="519"/>
    </location>
</feature>
<feature type="sequence variant" description="In allele b." evidence="12 15 24">
    <original>K</original>
    <variation>S</variation>
    <location>
        <position position="49"/>
    </location>
</feature>
<feature type="sequence variant" description="In allele b." evidence="12 15 24">
    <original>A</original>
    <variation>T</variation>
    <location>
        <position position="55"/>
    </location>
</feature>
<feature type="sequence variant" description="In allele b." evidence="12 15 24">
    <original>G</original>
    <variation>V</variation>
    <location>
        <position position="70"/>
    </location>
</feature>
<feature type="sequence variant" description="In allele b." evidence="12 15 24">
    <original>L</original>
    <variation>T</variation>
    <location>
        <position position="73"/>
    </location>
</feature>
<feature type="sequence variant" description="In allele b." evidence="12 15 24">
    <original>N</original>
    <variation>G</variation>
    <location>
        <position position="74"/>
    </location>
</feature>
<feature type="sequence variant" description="In allele b." evidence="12 15 24">
    <original>P</original>
    <variation>L</variation>
    <location>
        <position position="75"/>
    </location>
</feature>
<feature type="sequence variant" description="In allele b." evidence="12 15 24">
    <original>D</original>
    <variation>N</variation>
    <location>
        <position position="76"/>
    </location>
</feature>
<feature type="sequence variant" description="In allele b." evidence="12 15 24">
    <original>D</original>
    <variation>S</variation>
    <location>
        <position position="86"/>
    </location>
</feature>
<feature type="sequence variant" description="In allele b." evidence="12 15 24">
    <original>M</original>
    <variation>T</variation>
    <location>
        <position position="88"/>
    </location>
</feature>
<feature type="sequence variant" description="In allele b." evidence="12 15 24">
    <original>K</original>
    <variation>Q</variation>
    <location>
        <position position="90"/>
    </location>
</feature>
<feature type="sequence variant" description="In allele b." evidence="12 15 24">
    <original>G</original>
    <variation>E</variation>
    <location>
        <position position="92"/>
    </location>
</feature>
<feature type="sequence variant" description="In allele b." evidence="12 15 24">
    <original>E</original>
    <variation>V</variation>
    <location>
        <position position="99"/>
    </location>
</feature>
<feature type="sequence variant" description="In allele b." evidence="12 15 24">
    <original>R</original>
    <variation>G</variation>
    <location>
        <position position="118"/>
    </location>
</feature>
<feature type="sequence variant" description="In allele b." evidence="12 15 24">
    <original>A</original>
    <variation>P</variation>
    <location>
        <position position="119"/>
    </location>
</feature>
<feature type="sequence variant" description="In allele b." evidence="12 15 24">
    <original>F</original>
    <variation>I</variation>
    <location>
        <position position="125"/>
    </location>
</feature>
<feature type="sequence variant" description="In allele b." evidence="12 15 24">
    <original>Q</original>
    <variation>K</variation>
    <location>
        <position position="127"/>
    </location>
</feature>
<feature type="mutagenesis site" description="Phosphorylated on serine. Decreases bile acid transport Doesn't phosphorylated by EGFR. Doesn't increase interaction with SHC1. Completely inhibits insulin-stimulated phosphorylation. No effect on INSR internalization and INS degradation. Prevents CEACAM1 phosphorylation and the increase in its binding to FASN in the presence of INSR. No effect on cell-surface expression in response to INS. Abolishes phosphorylation by INSR. Abolishes indirect interaction with INSR." evidence="11 13 18 19 20 30">
    <original>Y</original>
    <variation>F</variation>
    <location>
        <position position="488"/>
    </location>
</feature>
<feature type="mutagenesis site" description="Phosphorylated on tyrosine. Impairs bile acid transport." evidence="18">
    <original>TS</original>
    <variation>AA</variation>
    <location>
        <begin position="502"/>
        <end position="503"/>
    </location>
</feature>
<feature type="mutagenesis site" description="Abolishes phosphorylation by EGFR. Reduces interaction with SHC1. Completely inhibits insulin-stimulated phosphorylation. No effect on INSR internalization and INS degradation. In L-SACC1; completely inhibits insulin-stimulated phosphorylation; develops hyperinsulinemia resulting from impaired insulin clearance; the hyperinsulinemia causes secondary insulin resistance with impaired glucose tolerance and random, but not fasting, hyperglycemia; insulin doesn't significantly decrease FASN activity in liver. Prevents CEACAM1 phosphorylation and the increase in its binding to FASN in the presence of INSR. No effect on cell-surface expression in response to INS." evidence="8 9 11 13 19 20 30">
    <original>S</original>
    <variation>A</variation>
    <location>
        <position position="503"/>
    </location>
</feature>
<feature type="mutagenesis site" description="Preserves the ability of INSR to induce CEACAM1 phosphorylation." evidence="13">
    <original>S</original>
    <variation>D</variation>
    <location>
        <position position="503"/>
    </location>
</feature>
<feature type="mutagenesis site" description="Increases INSR internalization and INS degradation. Phosphorylated by INSR. Prevents the increase in CEACAM1 binding to FASN by INSR. Decreases cell-surface expression in response to INS. Doesn't affect phosphorylation by INSR." evidence="13 19 30">
    <original>Y</original>
    <variation>F</variation>
    <location>
        <position position="513"/>
    </location>
</feature>
<comment type="function">
    <molecule>Isoform 1</molecule>
    <text evidence="1 2 8 9 11 13 17 18 19 23 30">Cell adhesion protein that mediates homophilic cell adhesion in a calcium-independent manner (PubMed:2373740, PubMed:8454589). Plays a role as coinhibitory receptor in immune response, insulin action and also functions as an activator during angiogenesis (PubMed:11850617). Its coinhibitory receptor function is phosphorylation- and PTPN6 -dependent, which in turn, suppress signal transduction of associated receptors by dephosphorylation of their downstream effectors (By similarity). Plays a role in immune response, of T-cells, natural killer (NK) and neutrophils (By similarity). Upon TCR/CD3 complex stimulation, inhibits TCR-mediated cytotoxicity by blocking granule exocytosis by mediating homophilic binding to adjacent cells, allowing interaction with and phosphorylation by LCK and interaction with the TCR/CD3 complex which recruits PTPN6 resulting in dephosphorylation of CD247 and ZAP70 (By similarity). Also inhibits T-cell proliferation and cytokine production through inhibition of JNK cascade and plays a crucial role in regulating autoimmunity and anti-tumor immunity by inhibiting T-cell through its interaction with HAVCR2 (By similarity). Upon natural killer (NK) cells activation, inhibit KLRK1-mediated cytolysis of CEACAM1-bearing tumor cells by trans-homophilic interactions with CEACAM1 on the target cell and lead to cis-interaction between CEACAM1 and KLRK1, allowing PTPN6 recruitment and then VAV1 dephosphorylation (By similarity). Upon neutrophils activation negatively regulates IL1B production by recruiting PTPN6 to a SYK-TLR4-CEACAM1 complex, that dephosphorylates SYK, reducing the production of reactive oxygen species (ROS) and lysosome disruption, which in turn, reduces the activity of the inflammasome (By similarity). Down-regulates neutrophil production by acting as a coinhibitory receptor for CSF3R by downregulating the CSF3R-STAT3 pathway through recruitment of PTPN6 that dephosphorylates CSF3R (By similarity). Also regulates insulin action by promoting INS clearance and regulating lipogenesis in liver through regulating insulin signaling (PubMed:11850617). Upon INS stimulation, undergoes phosphorylation by INSR leading to INS clearance by increasing receptor-mediated insulin endocytosis (PubMed:7592607, PubMed:9712832). This inernalization promotes interaction with FASN leading to receptor-mediated insulin degradation and to reduction of FASN activity leading to negative regulation of fatty acid synthesis (PubMed:16054098, PubMed:7592607). INSR-mediated phosphorylation also provokes a down-regulation of cell proliferation through SHC1 interaction resulting in decrease coupling of SHC1 to the MAPK3/ERK1-MAPK1/ERK2 and phosphatidylinositol 3-kinase pathways (PubMed:11694516). Functions as activator in angiogenesis by promoting blood vessel remodeling through endothelial cell differentiation and migration and in arteriogenesis by increasing the number of collateral arteries and collateral vessel calibers after ischemia (By similarity). Also regulates vascular permeability through the VEGFR2 signaling pathway resulting in control of nitric oxide production (By similarity). Down-regulates cell growth in response to EGF through its interaction with SHC1 that mediates interaction with EGFR resulting in decrease coupling of SHC1 to the MAPK3/ERK1-MAPK1/ERK2 pathway (PubMed:15467833). Negatively regulates platelet aggregation by decreasing platelet adhesion on type I collagen through the GPVI-FcRgamma complex (By similarity). Inhibits cell migration and cell scattering through interaction with FLNA; interferes with the interaction of FLNA with RALA (By similarity). Mediates bile acid transport activity in a phosphorylation dependent manner (PubMed:7518458). Negatively regulates osteoclastogenesis (By similarity).</text>
</comment>
<comment type="function">
    <molecule>Isoform 2</molecule>
    <text evidence="2 21 26">Cell adhesion proteins that mediates homophilic cell adhesion in a calcium-independent manner (PubMed:7774714, PubMed:8536699). Promotes populations of T-cells regulating IgA production and secretion associated with control of the commensal microbiota and resistance to enteropathogens (By similarity).</text>
</comment>
<comment type="subunit">
    <text evidence="1 2 8 11 13 14 16 17 27 28 29">Monomer (PubMed:19948503, PubMed:9003371). Oligomer. Heterodimer. Homodimer (PubMed:19948503). Cis-dimer/oligomer (via Ig-like C2-type and/or via cytoplasmic domains); induced by trans-homophilic cell adhesion through an allosteric mechanism transmitted by the Ig-like V-type domain, and is regulated by intracellular calcium and calmodulin (PubMed:19948503, PubMed:2373740, PubMed:8831574, PubMed:9003371). Interacts (via cytoplasmic domain) with calmodulin in a calcium dependent manner; reduces homophilic cell adhesion through dissociation of dimer (PubMed:8576129). Isoform 1 interacts (via cytoplasmic domain) with PTPN11 (preferentially) and PTPN6; cis-homodimer form is preferred; this interaction is decreased by formation of isoform 1 / isoform 2 cis-heterodimers and is dependent on the monomer/dimer equilibrium; this interaction is phosphorylation-dependent (PubMed:19948503). Isoform 1 interacts with LYN (By similarity). Isoform 1 interacts (via cytoplasmic domain) with SRC (via SH2 domain); this interaction is regulated by trans-homophilic cell adhesion (PubMed:19948503). Isoform 1 interacts (via cytoplasmic domain) with LCK; mediates phosphorylation at Tyr-488 and Tyr-513 resulting in PTPN6 association. Isoform 1 interacts with PTPN6; this interaction is phosphorylation-dependent and causes a profound decrease in TCR stimulation-induced CD247 and ZAP70 phosphorylation. Isoform 1 interacts with TCR/CD3 complex through TCR beta chain and CD3E; colocalizes at the cell surface and upon stimulation of the TCR/CD3 complex recruits PTPN6 in the TCR/CD3 complex, resulting in dephosphorylation of CD247 and ZAP70 (By similarity). Isoform 1 interacts (via cytoplasmic domain) with SHC1 (via SH2 domain); SHC1 mediates interaction with INSR or EGFR in a Ser-503 phosphorylation-dependent manner (PubMed:11694516). Isoform 1 interacts with EGFR; the interaction is indirect (PubMed:15467833). Isoform 1 interacts with CSF3R; down-regulates the CSF3R-STAT3 pathway through recruitment of PTPN6 that dephosphorylates CSF3R. Isoform 1 (phosphorylated form) interacts with TLR4 and SYK; recruits PTPN6 that dephosphorylates SYK, reducing the production of reactive oxygen species (ROS) and lysosome disruption, leading to a reduction of the inflammasome activity (By similarity). Isoform 1 interacts with FLNA; inhibits cell migration and cell scattering by interfering with the interaction of FLNA with RALA (PubMed:16291724). Isoform 1 interacts (via cytoplasmic domain) with PXN; the interaction is phosphotyrosyl-dependent. Isoform 1 interacts with KLRK1; recruits PTPN6 that dephosphorylates VAV1. Isoform 1 interacts with CEACAM8 (By similarity). Isoform 1 interacts with FASN; this interaction is insulin and phosphorylation-dependent; reduces fatty-acid synthase activity (PubMed:16054098). Interacts (via Ig-like V-type) with HAVCR2 (via Ig-like V-type); facilitates the maturation and cell surface expression of HAVCR2 thereby regulating T-cell tolerance induction. Isoform 2 interacts (via the cytoplasmic domain) with ANXA2; this interaction is regulated by phosphorylation and appears in the AIIt complex. Interacts (via Lewis X moieties) with CD209 (via C-type lectin domain); this interaction is regulated by the glycosylation pattern of CEACAM1 on cell types and regulates contact between dendritic cells and neutrophils (By similarity).</text>
</comment>
<comment type="subcellular location">
    <molecule>Isoform 1</molecule>
    <subcellularLocation>
        <location evidence="13 18 21 26 29 30">Cell membrane</location>
        <topology>Single-pass type I membrane protein</topology>
    </subcellularLocation>
    <subcellularLocation>
        <location evidence="21">Lateral cell membrane</location>
    </subcellularLocation>
    <subcellularLocation>
        <location evidence="21">Apical cell membrane</location>
    </subcellularLocation>
    <subcellularLocation>
        <location evidence="21">Basal cell membrane</location>
    </subcellularLocation>
    <subcellularLocation>
        <location evidence="16 29">Cell junction</location>
    </subcellularLocation>
    <subcellularLocation>
        <location evidence="16">Cell junction</location>
        <location evidence="16">Adherens junction</location>
    </subcellularLocation>
    <text evidence="16 21 25 29">Canalicular domain of hepatocyte plasma membranes (PubMed:8513803). Found as a mixture of monomer, dimer and oligomer in the plasma membrane. Occurs predominantly as cis-dimers and/or small cis-oligomers in the cell junction regions (PubMed:19948503). Found as dimer in the solution (PubMed:9003371). Predominantly localized to the lateral cell membranes (PubMed:7774714).</text>
</comment>
<comment type="subcellular location">
    <molecule>Isoform 2</molecule>
    <subcellularLocation>
        <location evidence="21 29">Cell membrane</location>
        <topology>Single-pass type I membrane protein</topology>
    </subcellularLocation>
    <subcellularLocation>
        <location evidence="21">Lateral cell membrane</location>
    </subcellularLocation>
    <subcellularLocation>
        <location evidence="21">Apical cell membrane</location>
    </subcellularLocation>
    <subcellularLocation>
        <location evidence="21">Basal cell membrane</location>
    </subcellularLocation>
    <subcellularLocation>
        <location evidence="16">Cell junction</location>
    </subcellularLocation>
    <subcellularLocation>
        <location evidence="16">Cell junction</location>
        <location evidence="16">Adherens junction</location>
    </subcellularLocation>
    <subcellularLocation>
        <location evidence="1">Cytoplasmic vesicle</location>
        <location evidence="1">Secretory vesicle</location>
    </subcellularLocation>
    <text evidence="1 16 21">Predominantly localized to the lateral cell membranes (PubMed:7774714). Found as a mixture of monomer, dimer and oligomer in the plasma membrane. Occurs predominantly as cis-dimers and/or small cis-oligomers in the cell junction regions (PubMed:19948503). Co-localizes with ANXA2 in secretory vesicles and with S100A10/p11 at the plasma membrane (By similarity).</text>
</comment>
<comment type="subcellular location">
    <subcellularLocation>
        <location evidence="2">Cell projection</location>
        <location evidence="2">Microvillus membrane</location>
        <topology evidence="36">Single-pass type I membrane protein</topology>
    </subcellularLocation>
    <subcellularLocation>
        <location evidence="2">Apical cell membrane</location>
        <topology evidence="36">Single-pass type I membrane protein</topology>
    </subcellularLocation>
    <text evidence="1 2">Localized to the apical glycocalyx surface (By similarity). Colocalizes with CEACAM20 at the apical brush border of intestinal cells (By similarity).</text>
</comment>
<comment type="alternative products">
    <event type="alternative splicing"/>
    <isoform>
        <id>P16573-1</id>
        <name>1</name>
        <name evidence="31">CEACAM1-4L</name>
        <name>C-CAM1</name>
        <name>L-form Cell-CAM105</name>
        <sequence type="displayed"/>
    </isoform>
    <isoform>
        <id>P16573-2</id>
        <name>2</name>
        <name evidence="31">CEACAM1-4S</name>
        <name>C-CAM2</name>
        <name>S-form Cell-CAM105</name>
        <sequence type="described" ref="VSP_002504 VSP_002505"/>
    </isoform>
    <text evidence="37">For each isoform it exists 2 allelic variants, named a and b. The allelic variants differ in 16 amino acids in the Ig-like V-type domain.</text>
</comment>
<comment type="tissue specificity">
    <text evidence="10 23">Expressed in epithelia, vessel endothelia, leukocytes and platelets. Isoform 1 and isoform 2 are highly expressed in liver and intestine, moderately in lung, and weakly in muscle, kidney, and spleen (PubMed:8454589). Expressed in granulocytes, lymphocytes, granulocytes, B cells, and T-cells (PubMed:11994468).</text>
</comment>
<comment type="domain">
    <text evidence="16 28">Ig-like V-type domain mediates trans-homophilic cell adhesion through homodimerization and this active process is regulated by tyrosine kinase, PTPN11 and PTPN6. Ig-like C2-type and/or cytoplasmic domains mediate cis-dimer/oligomer.</text>
</comment>
<comment type="PTM">
    <molecule>Isoform 1</molecule>
    <text evidence="1 2 11 13 18 20 22 30">Phosphorylated on serine and tyrosine (PubMed:8420979). Isoform 1 is phosphorylated on tyrosine by Src family kinases like SRC and LCK and by receptor like CSF3R, EGFR and INSR upon stimulation (PubMed:15467833, PubMed:16054098, PubMed:7626603, PubMed:9712832). Phosphorylated at Ser-503; mediates activity. Phosphorylated at Tyr-488; regulates activity (PubMed:7518458). Phosphorylated at Tyr-488 by EGFR and INSR upon stimulation; this phosphorylation is Ser-503-phosphorylation-dependent; mediates cellular internalization; increases interaction with FASN (PubMed:15467833, PubMed:16054098, PubMed:7626603, PubMed:9712832). Phosphorylated at Tyr-488 and Tyr-513 by LCK; mediates PTPN6 association and is regulated by homophilic ligation of CEACAM1 in the absence of T-cell activation (By similarity). Phosphorylated at Tyr-513; mediates interaction with PTPN11 (By similarity).</text>
</comment>
<comment type="PTM">
    <molecule>Isoform 2</molecule>
    <text evidence="22">Phosphorylated on serine and threonine.</text>
</comment>
<comment type="polymorphism">
    <text evidence="24">There are two different allelic variants of CEACAM1, named a and b. The allelic variants differ in 16 amino acids in the Ig-like V-type domain. The sequence shown here, corresponds to allele A.</text>
</comment>
<comment type="miscellaneous">
    <molecule>Isoform 1</molecule>
    <text>Allele a.</text>
</comment>
<comment type="miscellaneous">
    <molecule>Isoform 2</molecule>
    <text evidence="36">Allele a.</text>
</comment>
<comment type="similarity">
    <text evidence="36">Belongs to the immunoglobulin superfamily. CEA family.</text>
</comment>
<comment type="sequence caution" evidence="36">
    <conflict type="miscellaneous discrepancy">
        <sequence resource="EMBL-CDS" id="AAA16783"/>
    </conflict>
    <text>Dubious isoform. Probable cloning artifact lacking polyadenylation evidence.</text>
</comment>
<proteinExistence type="evidence at protein level"/>